<evidence type="ECO:0000250" key="1"/>
<evidence type="ECO:0000255" key="2"/>
<evidence type="ECO:0000305" key="3"/>
<name>TCYP_SHOC1</name>
<organism>
    <name type="scientific">Shouchella clausii (strain KSM-K16)</name>
    <name type="common">Alkalihalobacillus clausii</name>
    <dbReference type="NCBI Taxonomy" id="66692"/>
    <lineage>
        <taxon>Bacteria</taxon>
        <taxon>Bacillati</taxon>
        <taxon>Bacillota</taxon>
        <taxon>Bacilli</taxon>
        <taxon>Bacillales</taxon>
        <taxon>Bacillaceae</taxon>
        <taxon>Shouchella</taxon>
    </lineage>
</organism>
<accession>Q5WDX9</accession>
<dbReference type="EMBL" id="AP006627">
    <property type="protein sequence ID" value="BAD65431.1"/>
    <property type="molecule type" value="Genomic_DNA"/>
</dbReference>
<dbReference type="RefSeq" id="WP_011247739.1">
    <property type="nucleotide sequence ID" value="NC_006582.1"/>
</dbReference>
<dbReference type="SMR" id="Q5WDX9"/>
<dbReference type="STRING" id="66692.ABC2897"/>
<dbReference type="KEGG" id="bcl:ABC2897"/>
<dbReference type="eggNOG" id="COG1823">
    <property type="taxonomic scope" value="Bacteria"/>
</dbReference>
<dbReference type="HOGENOM" id="CLU_019375_0_1_9"/>
<dbReference type="OrthoDB" id="7778689at2"/>
<dbReference type="Proteomes" id="UP000001168">
    <property type="component" value="Chromosome"/>
</dbReference>
<dbReference type="GO" id="GO:0005886">
    <property type="term" value="C:plasma membrane"/>
    <property type="evidence" value="ECO:0007669"/>
    <property type="project" value="TreeGrafter"/>
</dbReference>
<dbReference type="GO" id="GO:0015184">
    <property type="term" value="F:L-cystine transmembrane transporter activity"/>
    <property type="evidence" value="ECO:0007669"/>
    <property type="project" value="TreeGrafter"/>
</dbReference>
<dbReference type="GO" id="GO:0015293">
    <property type="term" value="F:symporter activity"/>
    <property type="evidence" value="ECO:0007669"/>
    <property type="project" value="InterPro"/>
</dbReference>
<dbReference type="FunFam" id="1.10.3860.10:FF:000004">
    <property type="entry name" value="L-cystine transporter tcyP"/>
    <property type="match status" value="1"/>
</dbReference>
<dbReference type="Gene3D" id="1.10.3860.10">
    <property type="entry name" value="Sodium:dicarboxylate symporter"/>
    <property type="match status" value="1"/>
</dbReference>
<dbReference type="InterPro" id="IPR001991">
    <property type="entry name" value="Na-dicarboxylate_symporter"/>
</dbReference>
<dbReference type="InterPro" id="IPR036458">
    <property type="entry name" value="Na:dicarbo_symporter_sf"/>
</dbReference>
<dbReference type="PANTHER" id="PTHR42865:SF5">
    <property type="entry name" value="L-CYSTINE TRANSPORTER TCYP"/>
    <property type="match status" value="1"/>
</dbReference>
<dbReference type="PANTHER" id="PTHR42865">
    <property type="entry name" value="PROTON/GLUTAMATE-ASPARTATE SYMPORTER"/>
    <property type="match status" value="1"/>
</dbReference>
<dbReference type="Pfam" id="PF00375">
    <property type="entry name" value="SDF"/>
    <property type="match status" value="1"/>
</dbReference>
<dbReference type="PRINTS" id="PR00173">
    <property type="entry name" value="EDTRNSPORT"/>
</dbReference>
<dbReference type="SUPFAM" id="SSF118215">
    <property type="entry name" value="Proton glutamate symport protein"/>
    <property type="match status" value="1"/>
</dbReference>
<reference key="1">
    <citation type="submission" date="2003-10" db="EMBL/GenBank/DDBJ databases">
        <title>The complete genome sequence of the alkaliphilic Bacillus clausii KSM-K16.</title>
        <authorList>
            <person name="Takaki Y."/>
            <person name="Kageyama Y."/>
            <person name="Shimamura S."/>
            <person name="Suzuki H."/>
            <person name="Nishi S."/>
            <person name="Hatada Y."/>
            <person name="Kawai S."/>
            <person name="Ito S."/>
            <person name="Horikoshi K."/>
        </authorList>
    </citation>
    <scope>NUCLEOTIDE SEQUENCE [LARGE SCALE GENOMIC DNA]</scope>
    <source>
        <strain>KSM-K16</strain>
    </source>
</reference>
<gene>
    <name type="ordered locus">ABC2897</name>
</gene>
<keyword id="KW-0029">Amino-acid transport</keyword>
<keyword id="KW-0472">Membrane</keyword>
<keyword id="KW-1185">Reference proteome</keyword>
<keyword id="KW-0812">Transmembrane</keyword>
<keyword id="KW-1133">Transmembrane helix</keyword>
<keyword id="KW-0813">Transport</keyword>
<proteinExistence type="inferred from homology"/>
<comment type="function">
    <text evidence="1">Mediates uptake of L-cystine, the oxidized form of L-cysteine.</text>
</comment>
<comment type="subcellular location">
    <subcellularLocation>
        <location evidence="3">Membrane</location>
        <topology evidence="3">Multi-pass membrane protein</topology>
    </subcellularLocation>
</comment>
<comment type="similarity">
    <text evidence="3">Belongs to the dicarboxylate/amino acid:cation symporter (DAACS) (TC 2.A.23) family.</text>
</comment>
<feature type="chain" id="PRO_0000279739" description="L-cystine uptake protein TcyP">
    <location>
        <begin position="1"/>
        <end position="465"/>
    </location>
</feature>
<feature type="transmembrane region" description="Helical" evidence="2">
    <location>
        <begin position="3"/>
        <end position="23"/>
    </location>
</feature>
<feature type="transmembrane region" description="Helical" evidence="2">
    <location>
        <begin position="34"/>
        <end position="54"/>
    </location>
</feature>
<feature type="transmembrane region" description="Helical" evidence="2">
    <location>
        <begin position="73"/>
        <end position="93"/>
    </location>
</feature>
<feature type="transmembrane region" description="Helical" evidence="2">
    <location>
        <begin position="105"/>
        <end position="125"/>
    </location>
</feature>
<feature type="transmembrane region" description="Helical" evidence="2">
    <location>
        <begin position="184"/>
        <end position="204"/>
    </location>
</feature>
<feature type="transmembrane region" description="Helical" evidence="2">
    <location>
        <begin position="224"/>
        <end position="246"/>
    </location>
</feature>
<feature type="transmembrane region" description="Helical" evidence="2">
    <location>
        <begin position="263"/>
        <end position="283"/>
    </location>
</feature>
<feature type="transmembrane region" description="Helical" evidence="2">
    <location>
        <begin position="338"/>
        <end position="358"/>
    </location>
</feature>
<feature type="transmembrane region" description="Helical" evidence="2">
    <location>
        <begin position="370"/>
        <end position="390"/>
    </location>
</feature>
<feature type="transmembrane region" description="Helical" evidence="2">
    <location>
        <begin position="394"/>
        <end position="414"/>
    </location>
</feature>
<sequence length="465" mass="48930">MDLFLTLLIIAIVLAVAGLLFYMQKKHVSFSIRVLLALGAGVVYGLLLQFFFAPDSSVIQQSMDWVNILGTGYVRFLQMIVMPLIFISILSAFTRMTLTKNLGKISALILGTLIATTAIAAAIGITASSVFQLEAIDIPAGEAELSHGDALEESYAGMEAATLPQQIVELIPANPFLDLTGERPTSAIGVVIFSAFLGVAYLGVRRKQPEAADTFKGIVNALYAIIMRVVTLILRLTPYGVLAIMTRTVATSDLQAISTLGTFVLASYAALIVMFVIHLIILAATGLSPITYVKKAFPVLAFAFTSRTSAGALPMNIQTQKKLGVPEGIANFAGSFGLSIGQNGCAGIYPAMLAVMIAPTVGQNPLEPTFILLLIVVIAISSFGVAGVGGGATFAAILVLSALDFPIALAGLLISIEPLIDMGRTALNVSGSMVSGIFTSKVTGSLDKEVFSDPNEQLDTQDMQG</sequence>
<protein>
    <recommendedName>
        <fullName>L-cystine uptake protein TcyP</fullName>
    </recommendedName>
    <alternativeName>
        <fullName>Transporter of cystine TcyP</fullName>
    </alternativeName>
</protein>